<keyword id="KW-0067">ATP-binding</keyword>
<keyword id="KW-0963">Cytoplasm</keyword>
<keyword id="KW-0418">Kinase</keyword>
<keyword id="KW-0545">Nucleotide biosynthesis</keyword>
<keyword id="KW-0547">Nucleotide-binding</keyword>
<keyword id="KW-0808">Transferase</keyword>
<dbReference type="EC" id="2.7.4.3" evidence="1"/>
<dbReference type="EMBL" id="U57710">
    <property type="protein sequence ID" value="AAB49185.1"/>
    <property type="molecule type" value="Genomic_DNA"/>
</dbReference>
<dbReference type="SMR" id="Q59594"/>
<dbReference type="UniPathway" id="UPA00588">
    <property type="reaction ID" value="UER00649"/>
</dbReference>
<dbReference type="GO" id="GO:0005737">
    <property type="term" value="C:cytoplasm"/>
    <property type="evidence" value="ECO:0007669"/>
    <property type="project" value="UniProtKB-SubCell"/>
</dbReference>
<dbReference type="GO" id="GO:0004017">
    <property type="term" value="F:adenylate kinase activity"/>
    <property type="evidence" value="ECO:0007669"/>
    <property type="project" value="UniProtKB-EC"/>
</dbReference>
<dbReference type="GO" id="GO:0005524">
    <property type="term" value="F:ATP binding"/>
    <property type="evidence" value="ECO:0007669"/>
    <property type="project" value="UniProtKB-KW"/>
</dbReference>
<dbReference type="GO" id="GO:0044209">
    <property type="term" value="P:AMP salvage"/>
    <property type="evidence" value="ECO:0007669"/>
    <property type="project" value="UniProtKB-UniPathway"/>
</dbReference>
<dbReference type="CDD" id="cd01428">
    <property type="entry name" value="ADK"/>
    <property type="match status" value="1"/>
</dbReference>
<dbReference type="FunFam" id="3.40.50.300:FF:000106">
    <property type="entry name" value="Adenylate kinase mitochondrial"/>
    <property type="match status" value="1"/>
</dbReference>
<dbReference type="Gene3D" id="3.40.50.300">
    <property type="entry name" value="P-loop containing nucleotide triphosphate hydrolases"/>
    <property type="match status" value="1"/>
</dbReference>
<dbReference type="HAMAP" id="MF_00235">
    <property type="entry name" value="Adenylate_kinase_Adk"/>
    <property type="match status" value="1"/>
</dbReference>
<dbReference type="InterPro" id="IPR006259">
    <property type="entry name" value="Adenyl_kin_sub"/>
</dbReference>
<dbReference type="InterPro" id="IPR000850">
    <property type="entry name" value="Adenylat/UMP-CMP_kin"/>
</dbReference>
<dbReference type="InterPro" id="IPR033690">
    <property type="entry name" value="Adenylat_kinase_CS"/>
</dbReference>
<dbReference type="InterPro" id="IPR007862">
    <property type="entry name" value="Adenylate_kinase_lid-dom"/>
</dbReference>
<dbReference type="InterPro" id="IPR027417">
    <property type="entry name" value="P-loop_NTPase"/>
</dbReference>
<dbReference type="NCBIfam" id="TIGR01351">
    <property type="entry name" value="adk"/>
    <property type="match status" value="1"/>
</dbReference>
<dbReference type="NCBIfam" id="NF001379">
    <property type="entry name" value="PRK00279.1-1"/>
    <property type="match status" value="1"/>
</dbReference>
<dbReference type="PANTHER" id="PTHR23359">
    <property type="entry name" value="NUCLEOTIDE KINASE"/>
    <property type="match status" value="1"/>
</dbReference>
<dbReference type="Pfam" id="PF00406">
    <property type="entry name" value="ADK"/>
    <property type="match status" value="1"/>
</dbReference>
<dbReference type="Pfam" id="PF05191">
    <property type="entry name" value="ADK_lid"/>
    <property type="match status" value="1"/>
</dbReference>
<dbReference type="PRINTS" id="PR00094">
    <property type="entry name" value="ADENYLTKNASE"/>
</dbReference>
<dbReference type="SUPFAM" id="SSF52540">
    <property type="entry name" value="P-loop containing nucleoside triphosphate hydrolases"/>
    <property type="match status" value="1"/>
</dbReference>
<dbReference type="PROSITE" id="PS00113">
    <property type="entry name" value="ADENYLATE_KINASE"/>
    <property type="match status" value="1"/>
</dbReference>
<protein>
    <recommendedName>
        <fullName evidence="1">Adenylate kinase</fullName>
        <shortName evidence="1">AK</shortName>
        <ecNumber evidence="1">2.7.4.3</ecNumber>
    </recommendedName>
    <alternativeName>
        <fullName evidence="1">ATP-AMP transphosphorylase</fullName>
    </alternativeName>
    <alternativeName>
        <fullName evidence="1">ATP:AMP phosphotransferase</fullName>
    </alternativeName>
    <alternativeName>
        <fullName evidence="1">Adenylate monophosphate kinase</fullName>
    </alternativeName>
</protein>
<gene>
    <name evidence="1" type="primary">adk</name>
</gene>
<feature type="chain" id="PRO_0000158808" description="Adenylate kinase">
    <location>
        <begin position="1" status="less than"/>
        <end position="174" status="greater than"/>
    </location>
</feature>
<feature type="region of interest" description="NMP" evidence="1">
    <location>
        <begin position="12"/>
        <end position="41"/>
    </location>
</feature>
<feature type="region of interest" description="LID" evidence="1">
    <location>
        <begin position="104"/>
        <end position="141"/>
    </location>
</feature>
<feature type="binding site" evidence="1">
    <location>
        <position position="13"/>
    </location>
    <ligand>
        <name>AMP</name>
        <dbReference type="ChEBI" id="CHEBI:456215"/>
    </ligand>
</feature>
<feature type="binding site" evidence="1">
    <location>
        <position position="18"/>
    </location>
    <ligand>
        <name>AMP</name>
        <dbReference type="ChEBI" id="CHEBI:456215"/>
    </ligand>
</feature>
<feature type="binding site" evidence="1">
    <location>
        <begin position="39"/>
        <end position="41"/>
    </location>
    <ligand>
        <name>AMP</name>
        <dbReference type="ChEBI" id="CHEBI:456215"/>
    </ligand>
</feature>
<feature type="binding site" evidence="1">
    <location>
        <begin position="67"/>
        <end position="70"/>
    </location>
    <ligand>
        <name>AMP</name>
        <dbReference type="ChEBI" id="CHEBI:456215"/>
    </ligand>
</feature>
<feature type="binding site" evidence="1">
    <location>
        <position position="74"/>
    </location>
    <ligand>
        <name>AMP</name>
        <dbReference type="ChEBI" id="CHEBI:456215"/>
    </ligand>
</feature>
<feature type="binding site" evidence="1">
    <location>
        <position position="105"/>
    </location>
    <ligand>
        <name>ATP</name>
        <dbReference type="ChEBI" id="CHEBI:30616"/>
    </ligand>
</feature>
<feature type="binding site" evidence="1">
    <location>
        <begin position="114"/>
        <end position="115"/>
    </location>
    <ligand>
        <name>ATP</name>
        <dbReference type="ChEBI" id="CHEBI:30616"/>
    </ligand>
</feature>
<feature type="binding site" evidence="1">
    <location>
        <position position="138"/>
    </location>
    <ligand>
        <name>AMP</name>
        <dbReference type="ChEBI" id="CHEBI:456215"/>
    </ligand>
</feature>
<feature type="binding site" evidence="1">
    <location>
        <position position="149"/>
    </location>
    <ligand>
        <name>AMP</name>
        <dbReference type="ChEBI" id="CHEBI:456215"/>
    </ligand>
</feature>
<feature type="non-terminal residue">
    <location>
        <position position="1"/>
    </location>
</feature>
<feature type="non-terminal residue">
    <location>
        <position position="174"/>
    </location>
</feature>
<organism>
    <name type="scientific">Neisseria cinerea</name>
    <dbReference type="NCBI Taxonomy" id="483"/>
    <lineage>
        <taxon>Bacteria</taxon>
        <taxon>Pseudomonadati</taxon>
        <taxon>Pseudomonadota</taxon>
        <taxon>Betaproteobacteria</taxon>
        <taxon>Neisseriales</taxon>
        <taxon>Neisseriaceae</taxon>
        <taxon>Neisseria</taxon>
    </lineage>
</organism>
<accession>Q59594</accession>
<reference key="1">
    <citation type="journal article" date="1996" name="J. Mol. Evol.">
        <title>A comparison of the nucleotide sequences of the adk and recA genes of pathogenic and commensal Neisseria species: evidence for extensive interspecies recombination within adk.</title>
        <authorList>
            <person name="Feil E."/>
            <person name="Zhou J."/>
            <person name="Maynard Smith J."/>
            <person name="Spratt B.G."/>
        </authorList>
    </citation>
    <scope>NUCLEOTIDE SEQUENCE [GENOMIC DNA]</scope>
    <source>
        <strain>LNP 1646</strain>
    </source>
</reference>
<comment type="function">
    <text evidence="1">Catalyzes the reversible transfer of the terminal phosphate group between ATP and AMP. Plays an important role in cellular energy homeostasis and in adenine nucleotide metabolism.</text>
</comment>
<comment type="catalytic activity">
    <reaction evidence="1">
        <text>AMP + ATP = 2 ADP</text>
        <dbReference type="Rhea" id="RHEA:12973"/>
        <dbReference type="ChEBI" id="CHEBI:30616"/>
        <dbReference type="ChEBI" id="CHEBI:456215"/>
        <dbReference type="ChEBI" id="CHEBI:456216"/>
        <dbReference type="EC" id="2.7.4.3"/>
    </reaction>
</comment>
<comment type="pathway">
    <text evidence="1">Purine metabolism; AMP biosynthesis via salvage pathway; AMP from ADP: step 1/1.</text>
</comment>
<comment type="subunit">
    <text evidence="1">Monomer.</text>
</comment>
<comment type="subcellular location">
    <subcellularLocation>
        <location evidence="1">Cytoplasm</location>
    </subcellularLocation>
</comment>
<comment type="domain">
    <text evidence="1">Consists of three domains, a large central CORE domain and two small peripheral domains, NMPbind and LID, which undergo movements during catalysis. The LID domain closes over the site of phosphoryl transfer upon ATP binding. Assembling and dissambling the active center during each catalytic cycle provides an effective means to prevent ATP hydrolysis.</text>
</comment>
<comment type="similarity">
    <text evidence="1">Belongs to the adenylate kinase family.</text>
</comment>
<proteinExistence type="inferred from homology"/>
<name>KAD_NEICI</name>
<sequence>FITAAFDIPQISTGDMLRAAIKAGTPLGLEAKKIIDEGGLVRDDIIIGMVKERIAQDDCKNGFLFDGFPRTLAQAEAMVEAGVDLDAVVEIDVPDSVIVDRMSGRRVHLASGRTYHVTYNPPKVEGKDDVTGEDLIQRDDDKEETVKKRLAVYHEQTEVLVDFYSKLEGEHAPK</sequence>
<evidence type="ECO:0000255" key="1">
    <source>
        <dbReference type="HAMAP-Rule" id="MF_00235"/>
    </source>
</evidence>